<evidence type="ECO:0000255" key="1">
    <source>
        <dbReference type="HAMAP-Rule" id="MF_00227"/>
    </source>
</evidence>
<organism>
    <name type="scientific">Lactobacillus helveticus (strain DPC 4571)</name>
    <dbReference type="NCBI Taxonomy" id="405566"/>
    <lineage>
        <taxon>Bacteria</taxon>
        <taxon>Bacillati</taxon>
        <taxon>Bacillota</taxon>
        <taxon>Bacilli</taxon>
        <taxon>Lactobacillales</taxon>
        <taxon>Lactobacillaceae</taxon>
        <taxon>Lactobacillus</taxon>
    </lineage>
</organism>
<proteinExistence type="inferred from homology"/>
<sequence length="122" mass="14268">MRKSYRVKSEKDFQQVFESGNSVANRAFVIYKVEKPENKHFRVGISVGKKVGHTAVARNRLKRYIRAVIDEEKLEIDPQVDFLIITRPYARNFDMVKVRKNLLHALALAHIIEEMPDEVEEN</sequence>
<feature type="chain" id="PRO_1000071780" description="Ribonuclease P protein component">
    <location>
        <begin position="1"/>
        <end position="122"/>
    </location>
</feature>
<gene>
    <name evidence="1" type="primary">rnpA</name>
    <name type="ordered locus">lhv_2106</name>
</gene>
<name>RNPA_LACH4</name>
<accession>A8YTQ9</accession>
<dbReference type="EC" id="3.1.26.5" evidence="1"/>
<dbReference type="EMBL" id="CP000517">
    <property type="protein sequence ID" value="ABX27883.1"/>
    <property type="molecule type" value="Genomic_DNA"/>
</dbReference>
<dbReference type="RefSeq" id="WP_003624919.1">
    <property type="nucleotide sequence ID" value="NC_010080.1"/>
</dbReference>
<dbReference type="SMR" id="A8YTQ9"/>
<dbReference type="GeneID" id="83725248"/>
<dbReference type="KEGG" id="lhe:lhv_2106"/>
<dbReference type="eggNOG" id="COG0594">
    <property type="taxonomic scope" value="Bacteria"/>
</dbReference>
<dbReference type="HOGENOM" id="CLU_117179_9_1_9"/>
<dbReference type="Proteomes" id="UP000000790">
    <property type="component" value="Chromosome"/>
</dbReference>
<dbReference type="GO" id="GO:0030677">
    <property type="term" value="C:ribonuclease P complex"/>
    <property type="evidence" value="ECO:0007669"/>
    <property type="project" value="TreeGrafter"/>
</dbReference>
<dbReference type="GO" id="GO:0042781">
    <property type="term" value="F:3'-tRNA processing endoribonuclease activity"/>
    <property type="evidence" value="ECO:0007669"/>
    <property type="project" value="TreeGrafter"/>
</dbReference>
<dbReference type="GO" id="GO:0004526">
    <property type="term" value="F:ribonuclease P activity"/>
    <property type="evidence" value="ECO:0007669"/>
    <property type="project" value="UniProtKB-UniRule"/>
</dbReference>
<dbReference type="GO" id="GO:0000049">
    <property type="term" value="F:tRNA binding"/>
    <property type="evidence" value="ECO:0007669"/>
    <property type="project" value="UniProtKB-UniRule"/>
</dbReference>
<dbReference type="GO" id="GO:0001682">
    <property type="term" value="P:tRNA 5'-leader removal"/>
    <property type="evidence" value="ECO:0007669"/>
    <property type="project" value="UniProtKB-UniRule"/>
</dbReference>
<dbReference type="FunFam" id="3.30.230.10:FF:000021">
    <property type="entry name" value="Ribonuclease P protein component"/>
    <property type="match status" value="1"/>
</dbReference>
<dbReference type="Gene3D" id="3.30.230.10">
    <property type="match status" value="1"/>
</dbReference>
<dbReference type="HAMAP" id="MF_00227">
    <property type="entry name" value="RNase_P"/>
    <property type="match status" value="1"/>
</dbReference>
<dbReference type="InterPro" id="IPR020568">
    <property type="entry name" value="Ribosomal_Su5_D2-typ_SF"/>
</dbReference>
<dbReference type="InterPro" id="IPR014721">
    <property type="entry name" value="Ribsml_uS5_D2-typ_fold_subgr"/>
</dbReference>
<dbReference type="InterPro" id="IPR000100">
    <property type="entry name" value="RNase_P"/>
</dbReference>
<dbReference type="NCBIfam" id="TIGR00188">
    <property type="entry name" value="rnpA"/>
    <property type="match status" value="1"/>
</dbReference>
<dbReference type="PANTHER" id="PTHR33992">
    <property type="entry name" value="RIBONUCLEASE P PROTEIN COMPONENT"/>
    <property type="match status" value="1"/>
</dbReference>
<dbReference type="PANTHER" id="PTHR33992:SF1">
    <property type="entry name" value="RIBONUCLEASE P PROTEIN COMPONENT"/>
    <property type="match status" value="1"/>
</dbReference>
<dbReference type="Pfam" id="PF00825">
    <property type="entry name" value="Ribonuclease_P"/>
    <property type="match status" value="1"/>
</dbReference>
<dbReference type="SUPFAM" id="SSF54211">
    <property type="entry name" value="Ribosomal protein S5 domain 2-like"/>
    <property type="match status" value="1"/>
</dbReference>
<keyword id="KW-0255">Endonuclease</keyword>
<keyword id="KW-0378">Hydrolase</keyword>
<keyword id="KW-0540">Nuclease</keyword>
<keyword id="KW-0694">RNA-binding</keyword>
<keyword id="KW-0819">tRNA processing</keyword>
<reference key="1">
    <citation type="journal article" date="2008" name="J. Bacteriol.">
        <title>Genome sequence of Lactobacillus helveticus: an organism distinguished by selective gene loss and IS element expansion.</title>
        <authorList>
            <person name="Callanan M."/>
            <person name="Kaleta P."/>
            <person name="O'Callaghan J."/>
            <person name="O'Sullivan O."/>
            <person name="Jordan K."/>
            <person name="McAuliffe O."/>
            <person name="Sangrador-Vegas A."/>
            <person name="Slattery L."/>
            <person name="Fitzgerald G.F."/>
            <person name="Beresford T."/>
            <person name="Ross R.P."/>
        </authorList>
    </citation>
    <scope>NUCLEOTIDE SEQUENCE [LARGE SCALE GENOMIC DNA]</scope>
    <source>
        <strain>DPC 4571</strain>
    </source>
</reference>
<comment type="function">
    <text evidence="1">RNaseP catalyzes the removal of the 5'-leader sequence from pre-tRNA to produce the mature 5'-terminus. It can also cleave other RNA substrates such as 4.5S RNA. The protein component plays an auxiliary but essential role in vivo by binding to the 5'-leader sequence and broadening the substrate specificity of the ribozyme.</text>
</comment>
<comment type="catalytic activity">
    <reaction evidence="1">
        <text>Endonucleolytic cleavage of RNA, removing 5'-extranucleotides from tRNA precursor.</text>
        <dbReference type="EC" id="3.1.26.5"/>
    </reaction>
</comment>
<comment type="subunit">
    <text evidence="1">Consists of a catalytic RNA component (M1 or rnpB) and a protein subunit.</text>
</comment>
<comment type="similarity">
    <text evidence="1">Belongs to the RnpA family.</text>
</comment>
<protein>
    <recommendedName>
        <fullName evidence="1">Ribonuclease P protein component</fullName>
        <shortName evidence="1">RNase P protein</shortName>
        <shortName evidence="1">RNaseP protein</shortName>
        <ecNumber evidence="1">3.1.26.5</ecNumber>
    </recommendedName>
    <alternativeName>
        <fullName evidence="1">Protein C5</fullName>
    </alternativeName>
</protein>